<dbReference type="EMBL" id="CP000909">
    <property type="protein sequence ID" value="ABY35588.1"/>
    <property type="molecule type" value="Genomic_DNA"/>
</dbReference>
<dbReference type="RefSeq" id="WP_012258241.1">
    <property type="nucleotide sequence ID" value="NC_010175.1"/>
</dbReference>
<dbReference type="RefSeq" id="YP_001635977.1">
    <property type="nucleotide sequence ID" value="NC_010175.1"/>
</dbReference>
<dbReference type="SMR" id="A9WH76"/>
<dbReference type="FunCoup" id="A9WH76">
    <property type="interactions" value="462"/>
</dbReference>
<dbReference type="STRING" id="324602.Caur_2379"/>
<dbReference type="EnsemblBacteria" id="ABY35588">
    <property type="protein sequence ID" value="ABY35588"/>
    <property type="gene ID" value="Caur_2379"/>
</dbReference>
<dbReference type="KEGG" id="cau:Caur_2379"/>
<dbReference type="PATRIC" id="fig|324602.8.peg.2693"/>
<dbReference type="eggNOG" id="COG0093">
    <property type="taxonomic scope" value="Bacteria"/>
</dbReference>
<dbReference type="HOGENOM" id="CLU_095071_2_1_0"/>
<dbReference type="InParanoid" id="A9WH76"/>
<dbReference type="Proteomes" id="UP000002008">
    <property type="component" value="Chromosome"/>
</dbReference>
<dbReference type="GO" id="GO:0022625">
    <property type="term" value="C:cytosolic large ribosomal subunit"/>
    <property type="evidence" value="ECO:0000318"/>
    <property type="project" value="GO_Central"/>
</dbReference>
<dbReference type="GO" id="GO:0070180">
    <property type="term" value="F:large ribosomal subunit rRNA binding"/>
    <property type="evidence" value="ECO:0000318"/>
    <property type="project" value="GO_Central"/>
</dbReference>
<dbReference type="GO" id="GO:0003735">
    <property type="term" value="F:structural constituent of ribosome"/>
    <property type="evidence" value="ECO:0000318"/>
    <property type="project" value="GO_Central"/>
</dbReference>
<dbReference type="GO" id="GO:0006412">
    <property type="term" value="P:translation"/>
    <property type="evidence" value="ECO:0007669"/>
    <property type="project" value="UniProtKB-UniRule"/>
</dbReference>
<dbReference type="CDD" id="cd00337">
    <property type="entry name" value="Ribosomal_uL14"/>
    <property type="match status" value="1"/>
</dbReference>
<dbReference type="FunFam" id="2.40.150.20:FF:000001">
    <property type="entry name" value="50S ribosomal protein L14"/>
    <property type="match status" value="1"/>
</dbReference>
<dbReference type="Gene3D" id="2.40.150.20">
    <property type="entry name" value="Ribosomal protein L14"/>
    <property type="match status" value="1"/>
</dbReference>
<dbReference type="HAMAP" id="MF_01367">
    <property type="entry name" value="Ribosomal_uL14"/>
    <property type="match status" value="1"/>
</dbReference>
<dbReference type="InterPro" id="IPR000218">
    <property type="entry name" value="Ribosomal_uL14"/>
</dbReference>
<dbReference type="InterPro" id="IPR005745">
    <property type="entry name" value="Ribosomal_uL14_bac-type"/>
</dbReference>
<dbReference type="InterPro" id="IPR019972">
    <property type="entry name" value="Ribosomal_uL14_CS"/>
</dbReference>
<dbReference type="InterPro" id="IPR036853">
    <property type="entry name" value="Ribosomal_uL14_sf"/>
</dbReference>
<dbReference type="NCBIfam" id="TIGR01067">
    <property type="entry name" value="rplN_bact"/>
    <property type="match status" value="1"/>
</dbReference>
<dbReference type="PANTHER" id="PTHR11761">
    <property type="entry name" value="50S/60S RIBOSOMAL PROTEIN L14/L23"/>
    <property type="match status" value="1"/>
</dbReference>
<dbReference type="PANTHER" id="PTHR11761:SF3">
    <property type="entry name" value="LARGE RIBOSOMAL SUBUNIT PROTEIN UL14M"/>
    <property type="match status" value="1"/>
</dbReference>
<dbReference type="Pfam" id="PF00238">
    <property type="entry name" value="Ribosomal_L14"/>
    <property type="match status" value="1"/>
</dbReference>
<dbReference type="SMART" id="SM01374">
    <property type="entry name" value="Ribosomal_L14"/>
    <property type="match status" value="1"/>
</dbReference>
<dbReference type="SUPFAM" id="SSF50193">
    <property type="entry name" value="Ribosomal protein L14"/>
    <property type="match status" value="1"/>
</dbReference>
<dbReference type="PROSITE" id="PS00049">
    <property type="entry name" value="RIBOSOMAL_L14"/>
    <property type="match status" value="1"/>
</dbReference>
<evidence type="ECO:0000255" key="1">
    <source>
        <dbReference type="HAMAP-Rule" id="MF_01367"/>
    </source>
</evidence>
<evidence type="ECO:0000305" key="2"/>
<reference key="1">
    <citation type="journal article" date="2011" name="BMC Genomics">
        <title>Complete genome sequence of the filamentous anoxygenic phototrophic bacterium Chloroflexus aurantiacus.</title>
        <authorList>
            <person name="Tang K.H."/>
            <person name="Barry K."/>
            <person name="Chertkov O."/>
            <person name="Dalin E."/>
            <person name="Han C.S."/>
            <person name="Hauser L.J."/>
            <person name="Honchak B.M."/>
            <person name="Karbach L.E."/>
            <person name="Land M.L."/>
            <person name="Lapidus A."/>
            <person name="Larimer F.W."/>
            <person name="Mikhailova N."/>
            <person name="Pitluck S."/>
            <person name="Pierson B.K."/>
            <person name="Blankenship R.E."/>
        </authorList>
    </citation>
    <scope>NUCLEOTIDE SEQUENCE [LARGE SCALE GENOMIC DNA]</scope>
    <source>
        <strain>ATCC 29366 / DSM 635 / J-10-fl</strain>
    </source>
</reference>
<keyword id="KW-1185">Reference proteome</keyword>
<keyword id="KW-0687">Ribonucleoprotein</keyword>
<keyword id="KW-0689">Ribosomal protein</keyword>
<keyword id="KW-0694">RNA-binding</keyword>
<keyword id="KW-0699">rRNA-binding</keyword>
<organism>
    <name type="scientific">Chloroflexus aurantiacus (strain ATCC 29366 / DSM 635 / J-10-fl)</name>
    <dbReference type="NCBI Taxonomy" id="324602"/>
    <lineage>
        <taxon>Bacteria</taxon>
        <taxon>Bacillati</taxon>
        <taxon>Chloroflexota</taxon>
        <taxon>Chloroflexia</taxon>
        <taxon>Chloroflexales</taxon>
        <taxon>Chloroflexineae</taxon>
        <taxon>Chloroflexaceae</taxon>
        <taxon>Chloroflexus</taxon>
    </lineage>
</organism>
<gene>
    <name evidence="1" type="primary">rplN</name>
    <name type="ordered locus">Caur_2379</name>
</gene>
<accession>A9WH76</accession>
<name>RL14_CHLAA</name>
<protein>
    <recommendedName>
        <fullName evidence="1">Large ribosomal subunit protein uL14</fullName>
    </recommendedName>
    <alternativeName>
        <fullName evidence="2">50S ribosomal protein L14</fullName>
    </alternativeName>
</protein>
<feature type="chain" id="PRO_1000087119" description="Large ribosomal subunit protein uL14">
    <location>
        <begin position="1"/>
        <end position="122"/>
    </location>
</feature>
<sequence length="122" mass="13338">MIQPQTRLKVADNTGAKEIMCIRVLGGSRVRYGRVGDIIVASVKVATPGGQVKKGDVVKAVIIRTAKEYGRPDGSHIRFDDNAAVLIGKENNPRGTRIFGPVARELREKQFMRIVSLAPEVL</sequence>
<comment type="function">
    <text evidence="1">Binds to 23S rRNA. Forms part of two intersubunit bridges in the 70S ribosome.</text>
</comment>
<comment type="subunit">
    <text evidence="1">Part of the 50S ribosomal subunit. Forms a cluster with proteins L3 and L19. In the 70S ribosome, L14 and L19 interact and together make contacts with the 16S rRNA in bridges B5 and B8.</text>
</comment>
<comment type="similarity">
    <text evidence="1">Belongs to the universal ribosomal protein uL14 family.</text>
</comment>
<proteinExistence type="inferred from homology"/>